<dbReference type="EMBL" id="AF073481">
    <property type="protein sequence ID" value="AAD41638.1"/>
    <property type="molecule type" value="mRNA"/>
</dbReference>
<dbReference type="EMBL" id="AF153474">
    <property type="protein sequence ID" value="AAF28108.1"/>
    <property type="molecule type" value="Genomic_DNA"/>
</dbReference>
<dbReference type="EMBL" id="AF153459">
    <property type="protein sequence ID" value="AAF28108.1"/>
    <property type="status" value="JOINED"/>
    <property type="molecule type" value="Genomic_DNA"/>
</dbReference>
<dbReference type="EMBL" id="AF153460">
    <property type="protein sequence ID" value="AAF28108.1"/>
    <property type="status" value="JOINED"/>
    <property type="molecule type" value="Genomic_DNA"/>
</dbReference>
<dbReference type="EMBL" id="AF153461">
    <property type="protein sequence ID" value="AAF28108.1"/>
    <property type="status" value="JOINED"/>
    <property type="molecule type" value="Genomic_DNA"/>
</dbReference>
<dbReference type="EMBL" id="AF153462">
    <property type="protein sequence ID" value="AAF28108.1"/>
    <property type="status" value="JOINED"/>
    <property type="molecule type" value="Genomic_DNA"/>
</dbReference>
<dbReference type="EMBL" id="AF153463">
    <property type="protein sequence ID" value="AAF28108.1"/>
    <property type="status" value="JOINED"/>
    <property type="molecule type" value="Genomic_DNA"/>
</dbReference>
<dbReference type="EMBL" id="AF153464">
    <property type="protein sequence ID" value="AAF28108.1"/>
    <property type="status" value="JOINED"/>
    <property type="molecule type" value="Genomic_DNA"/>
</dbReference>
<dbReference type="EMBL" id="AF153465">
    <property type="protein sequence ID" value="AAF28108.1"/>
    <property type="status" value="JOINED"/>
    <property type="molecule type" value="Genomic_DNA"/>
</dbReference>
<dbReference type="EMBL" id="AF153466">
    <property type="protein sequence ID" value="AAF28108.1"/>
    <property type="status" value="JOINED"/>
    <property type="molecule type" value="Genomic_DNA"/>
</dbReference>
<dbReference type="EMBL" id="AF153467">
    <property type="protein sequence ID" value="AAF28108.1"/>
    <property type="status" value="JOINED"/>
    <property type="molecule type" value="Genomic_DNA"/>
</dbReference>
<dbReference type="EMBL" id="AF153468">
    <property type="protein sequence ID" value="AAF28108.1"/>
    <property type="status" value="JOINED"/>
    <property type="molecule type" value="Genomic_DNA"/>
</dbReference>
<dbReference type="EMBL" id="AF153469">
    <property type="protein sequence ID" value="AAF28108.1"/>
    <property type="status" value="JOINED"/>
    <property type="molecule type" value="Genomic_DNA"/>
</dbReference>
<dbReference type="EMBL" id="AF153470">
    <property type="protein sequence ID" value="AAF28108.1"/>
    <property type="status" value="JOINED"/>
    <property type="molecule type" value="Genomic_DNA"/>
</dbReference>
<dbReference type="EMBL" id="AF153471">
    <property type="protein sequence ID" value="AAF28108.1"/>
    <property type="status" value="JOINED"/>
    <property type="molecule type" value="Genomic_DNA"/>
</dbReference>
<dbReference type="EMBL" id="AF153472">
    <property type="protein sequence ID" value="AAF28108.1"/>
    <property type="status" value="JOINED"/>
    <property type="molecule type" value="Genomic_DNA"/>
</dbReference>
<dbReference type="EMBL" id="AF153473">
    <property type="protein sequence ID" value="AAF28108.1"/>
    <property type="status" value="JOINED"/>
    <property type="molecule type" value="Genomic_DNA"/>
</dbReference>
<dbReference type="EMBL" id="AL139819">
    <property type="status" value="NOT_ANNOTATED_CDS"/>
    <property type="molecule type" value="Genomic_DNA"/>
</dbReference>
<dbReference type="EMBL" id="CH471066">
    <property type="protein sequence ID" value="EAW49833.1"/>
    <property type="molecule type" value="Genomic_DNA"/>
</dbReference>
<dbReference type="EMBL" id="BC025665">
    <property type="protein sequence ID" value="AAH25665.1"/>
    <property type="molecule type" value="mRNA"/>
</dbReference>
<dbReference type="EMBL" id="AF094827">
    <property type="protein sequence ID" value="AAD08695.1"/>
    <property type="molecule type" value="mRNA"/>
</dbReference>
<dbReference type="EMBL" id="AF053316">
    <property type="protein sequence ID" value="AAD51859.1"/>
    <property type="molecule type" value="mRNA"/>
</dbReference>
<dbReference type="CCDS" id="CCDS7492.1">
    <molecule id="Q9P0L9-1"/>
</dbReference>
<dbReference type="RefSeq" id="NP_001240766.1">
    <property type="nucleotide sequence ID" value="NM_001253837.1"/>
</dbReference>
<dbReference type="RefSeq" id="NP_057196.2">
    <molecule id="Q9P0L9-1"/>
    <property type="nucleotide sequence ID" value="NM_016112.2"/>
</dbReference>
<dbReference type="PDB" id="3TE3">
    <property type="method" value="X-ray"/>
    <property type="resolution" value="2.69 A"/>
    <property type="chains" value="A/B/C/D/E/F=699-737"/>
</dbReference>
<dbReference type="PDB" id="4GIF">
    <property type="method" value="X-ray"/>
    <property type="resolution" value="2.80 A"/>
    <property type="chains" value="A=699-743"/>
</dbReference>
<dbReference type="PDB" id="6DU8">
    <property type="method" value="EM"/>
    <property type="resolution" value="3.11 A"/>
    <property type="chains" value="A/B/C/D=1-805"/>
</dbReference>
<dbReference type="PDBsum" id="3TE3"/>
<dbReference type="PDBsum" id="4GIF"/>
<dbReference type="PDBsum" id="6DU8"/>
<dbReference type="EMDB" id="EMD-8912"/>
<dbReference type="SMR" id="Q9P0L9"/>
<dbReference type="BioGRID" id="114499">
    <property type="interactions" value="3"/>
</dbReference>
<dbReference type="FunCoup" id="Q9P0L9">
    <property type="interactions" value="89"/>
</dbReference>
<dbReference type="IntAct" id="Q9P0L9">
    <property type="interactions" value="2"/>
</dbReference>
<dbReference type="MINT" id="Q9P0L9"/>
<dbReference type="STRING" id="9606.ENSP00000325296"/>
<dbReference type="DrugBank" id="DB11093">
    <property type="generic name" value="Calcium citrate"/>
</dbReference>
<dbReference type="DrugBank" id="DB11348">
    <property type="generic name" value="Calcium Phosphate"/>
</dbReference>
<dbReference type="DrugBank" id="DB14481">
    <property type="generic name" value="Calcium phosphate dihydrate"/>
</dbReference>
<dbReference type="GuidetoPHARMACOLOGY" id="505"/>
<dbReference type="TCDB" id="1.A.5.1.3">
    <property type="family name" value="the polycystin cation channel (pcc) family"/>
</dbReference>
<dbReference type="GlyCosmos" id="Q9P0L9">
    <property type="glycosylation" value="4 sites, No reported glycans"/>
</dbReference>
<dbReference type="GlyGen" id="Q9P0L9">
    <property type="glycosylation" value="4 sites"/>
</dbReference>
<dbReference type="iPTMnet" id="Q9P0L9"/>
<dbReference type="PhosphoSitePlus" id="Q9P0L9"/>
<dbReference type="SwissPalm" id="Q9P0L9"/>
<dbReference type="BioMuta" id="PKD2L1"/>
<dbReference type="DMDM" id="23821938"/>
<dbReference type="jPOST" id="Q9P0L9"/>
<dbReference type="MassIVE" id="Q9P0L9"/>
<dbReference type="PaxDb" id="9606-ENSP00000325296"/>
<dbReference type="PeptideAtlas" id="Q9P0L9"/>
<dbReference type="ProteomicsDB" id="83574">
    <molecule id="Q9P0L9-1"/>
</dbReference>
<dbReference type="ProteomicsDB" id="83576">
    <molecule id="Q9P0L9-3"/>
</dbReference>
<dbReference type="ProteomicsDB" id="83577">
    <molecule id="Q9P0L9-4"/>
</dbReference>
<dbReference type="Antibodypedia" id="31169">
    <property type="antibodies" value="136 antibodies from 23 providers"/>
</dbReference>
<dbReference type="DNASU" id="9033"/>
<dbReference type="Ensembl" id="ENST00000318222.4">
    <molecule id="Q9P0L9-1"/>
    <property type="protein sequence ID" value="ENSP00000325296.3"/>
    <property type="gene ID" value="ENSG00000107593.17"/>
</dbReference>
<dbReference type="GeneID" id="9033"/>
<dbReference type="KEGG" id="hsa:9033"/>
<dbReference type="MANE-Select" id="ENST00000318222.4">
    <property type="protein sequence ID" value="ENSP00000325296.3"/>
    <property type="RefSeq nucleotide sequence ID" value="NM_016112.3"/>
    <property type="RefSeq protein sequence ID" value="NP_057196.2"/>
</dbReference>
<dbReference type="UCSC" id="uc001kqx.2">
    <molecule id="Q9P0L9-1"/>
    <property type="organism name" value="human"/>
</dbReference>
<dbReference type="AGR" id="HGNC:9011"/>
<dbReference type="CTD" id="9033"/>
<dbReference type="DisGeNET" id="9033"/>
<dbReference type="GeneCards" id="PKD2L1"/>
<dbReference type="HGNC" id="HGNC:9011">
    <property type="gene designation" value="PKD2L1"/>
</dbReference>
<dbReference type="HPA" id="ENSG00000107593">
    <property type="expression patterns" value="Tissue enhanced (lymphoid tissue, retina)"/>
</dbReference>
<dbReference type="MalaCards" id="PKD2L1"/>
<dbReference type="MIM" id="604532">
    <property type="type" value="gene"/>
</dbReference>
<dbReference type="neXtProt" id="NX_Q9P0L9"/>
<dbReference type="OpenTargets" id="ENSG00000107593"/>
<dbReference type="PharmGKB" id="PA33344"/>
<dbReference type="VEuPathDB" id="HostDB:ENSG00000107593"/>
<dbReference type="eggNOG" id="KOG3599">
    <property type="taxonomic scope" value="Eukaryota"/>
</dbReference>
<dbReference type="GeneTree" id="ENSGT00940000157274"/>
<dbReference type="HOGENOM" id="CLU_012097_0_0_1"/>
<dbReference type="InParanoid" id="Q9P0L9"/>
<dbReference type="OMA" id="AFSQFDR"/>
<dbReference type="OrthoDB" id="444119at2759"/>
<dbReference type="PAN-GO" id="Q9P0L9">
    <property type="GO annotations" value="8 GO annotations based on evolutionary models"/>
</dbReference>
<dbReference type="PhylomeDB" id="Q9P0L9"/>
<dbReference type="TreeFam" id="TF316484"/>
<dbReference type="PathwayCommons" id="Q9P0L9"/>
<dbReference type="SignaLink" id="Q9P0L9"/>
<dbReference type="SIGNOR" id="Q9P0L9"/>
<dbReference type="BioGRID-ORCS" id="9033">
    <property type="hits" value="15 hits in 1151 CRISPR screens"/>
</dbReference>
<dbReference type="CD-CODE" id="8C2F96ED">
    <property type="entry name" value="Centrosome"/>
</dbReference>
<dbReference type="ChiTaRS" id="PKD2L1">
    <property type="organism name" value="human"/>
</dbReference>
<dbReference type="EvolutionaryTrace" id="Q9P0L9"/>
<dbReference type="GeneWiki" id="PKD2L1"/>
<dbReference type="GenomeRNAi" id="9033"/>
<dbReference type="Pharos" id="Q9P0L9">
    <property type="development level" value="Tchem"/>
</dbReference>
<dbReference type="PRO" id="PR:Q9P0L9"/>
<dbReference type="Proteomes" id="UP000005640">
    <property type="component" value="Chromosome 10"/>
</dbReference>
<dbReference type="RNAct" id="Q9P0L9">
    <property type="molecule type" value="protein"/>
</dbReference>
<dbReference type="Bgee" id="ENSG00000107593">
    <property type="expression patterns" value="Expressed in spleen and 128 other cell types or tissues"/>
</dbReference>
<dbReference type="ExpressionAtlas" id="Q9P0L9">
    <property type="expression patterns" value="baseline and differential"/>
</dbReference>
<dbReference type="GO" id="GO:0015629">
    <property type="term" value="C:actin cytoskeleton"/>
    <property type="evidence" value="ECO:0000314"/>
    <property type="project" value="HPA"/>
</dbReference>
<dbReference type="GO" id="GO:0034704">
    <property type="term" value="C:calcium channel complex"/>
    <property type="evidence" value="ECO:0000314"/>
    <property type="project" value="UniProtKB"/>
</dbReference>
<dbReference type="GO" id="GO:0009986">
    <property type="term" value="C:cell surface"/>
    <property type="evidence" value="ECO:0007669"/>
    <property type="project" value="Ensembl"/>
</dbReference>
<dbReference type="GO" id="GO:0060170">
    <property type="term" value="C:ciliary membrane"/>
    <property type="evidence" value="ECO:0007669"/>
    <property type="project" value="UniProtKB-SubCell"/>
</dbReference>
<dbReference type="GO" id="GO:0031410">
    <property type="term" value="C:cytoplasmic vesicle"/>
    <property type="evidence" value="ECO:0007669"/>
    <property type="project" value="UniProtKB-KW"/>
</dbReference>
<dbReference type="GO" id="GO:0005829">
    <property type="term" value="C:cytosol"/>
    <property type="evidence" value="ECO:0000314"/>
    <property type="project" value="HPA"/>
</dbReference>
<dbReference type="GO" id="GO:0005783">
    <property type="term" value="C:endoplasmic reticulum"/>
    <property type="evidence" value="ECO:0000250"/>
    <property type="project" value="BHF-UCL"/>
</dbReference>
<dbReference type="GO" id="GO:0043231">
    <property type="term" value="C:intracellular membrane-bounded organelle"/>
    <property type="evidence" value="ECO:0000314"/>
    <property type="project" value="BHF-UCL"/>
</dbReference>
<dbReference type="GO" id="GO:0016020">
    <property type="term" value="C:membrane"/>
    <property type="evidence" value="ECO:0000314"/>
    <property type="project" value="UniProtKB"/>
</dbReference>
<dbReference type="GO" id="GO:0097730">
    <property type="term" value="C:non-motile cilium"/>
    <property type="evidence" value="ECO:0000314"/>
    <property type="project" value="UniProtKB"/>
</dbReference>
<dbReference type="GO" id="GO:0005886">
    <property type="term" value="C:plasma membrane"/>
    <property type="evidence" value="ECO:0000314"/>
    <property type="project" value="HPA"/>
</dbReference>
<dbReference type="GO" id="GO:0043235">
    <property type="term" value="C:receptor complex"/>
    <property type="evidence" value="ECO:0000250"/>
    <property type="project" value="BHF-UCL"/>
</dbReference>
<dbReference type="GO" id="GO:0051393">
    <property type="term" value="F:alpha-actinin binding"/>
    <property type="evidence" value="ECO:0000353"/>
    <property type="project" value="BHF-UCL"/>
</dbReference>
<dbReference type="GO" id="GO:0005262">
    <property type="term" value="F:calcium channel activity"/>
    <property type="evidence" value="ECO:0000318"/>
    <property type="project" value="GO_Central"/>
</dbReference>
<dbReference type="GO" id="GO:0005509">
    <property type="term" value="F:calcium ion binding"/>
    <property type="evidence" value="ECO:0000314"/>
    <property type="project" value="UniProtKB"/>
</dbReference>
<dbReference type="GO" id="GO:0005227">
    <property type="term" value="F:calcium-activated cation channel activity"/>
    <property type="evidence" value="ECO:0000314"/>
    <property type="project" value="UniProtKB"/>
</dbReference>
<dbReference type="GO" id="GO:0015269">
    <property type="term" value="F:calcium-activated potassium channel activity"/>
    <property type="evidence" value="ECO:0000314"/>
    <property type="project" value="BHF-UCL"/>
</dbReference>
<dbReference type="GO" id="GO:0008092">
    <property type="term" value="F:cytoskeletal protein binding"/>
    <property type="evidence" value="ECO:0000353"/>
    <property type="project" value="UniProtKB"/>
</dbReference>
<dbReference type="GO" id="GO:0042802">
    <property type="term" value="F:identical protein binding"/>
    <property type="evidence" value="ECO:0000250"/>
    <property type="project" value="BHF-UCL"/>
</dbReference>
<dbReference type="GO" id="GO:0005261">
    <property type="term" value="F:monoatomic cation channel activity"/>
    <property type="evidence" value="ECO:0000314"/>
    <property type="project" value="UniProtKB"/>
</dbReference>
<dbReference type="GO" id="GO:0051371">
    <property type="term" value="F:muscle alpha-actinin binding"/>
    <property type="evidence" value="ECO:0000353"/>
    <property type="project" value="BHF-UCL"/>
</dbReference>
<dbReference type="GO" id="GO:1990760">
    <property type="term" value="F:osmolarity-sensing monoatomic cation channel activity"/>
    <property type="evidence" value="ECO:0007669"/>
    <property type="project" value="Ensembl"/>
</dbReference>
<dbReference type="GO" id="GO:0160128">
    <property type="term" value="F:pH-gated monoatomic ion channel activity"/>
    <property type="evidence" value="ECO:0000314"/>
    <property type="project" value="UniProtKB"/>
</dbReference>
<dbReference type="GO" id="GO:0005272">
    <property type="term" value="F:sodium channel activity"/>
    <property type="evidence" value="ECO:0000314"/>
    <property type="project" value="BHF-UCL"/>
</dbReference>
<dbReference type="GO" id="GO:0033040">
    <property type="term" value="F:sour taste receptor activity"/>
    <property type="evidence" value="ECO:0007669"/>
    <property type="project" value="Ensembl"/>
</dbReference>
<dbReference type="GO" id="GO:0044325">
    <property type="term" value="F:transmembrane transporter binding"/>
    <property type="evidence" value="ECO:0007669"/>
    <property type="project" value="Ensembl"/>
</dbReference>
<dbReference type="GO" id="GO:0071468">
    <property type="term" value="P:cellular response to acidic pH"/>
    <property type="evidence" value="ECO:0000250"/>
    <property type="project" value="BHF-UCL"/>
</dbReference>
<dbReference type="GO" id="GO:0001581">
    <property type="term" value="P:detection of chemical stimulus involved in sensory perception of sour taste"/>
    <property type="evidence" value="ECO:0000250"/>
    <property type="project" value="BHF-UCL"/>
</dbReference>
<dbReference type="GO" id="GO:0050912">
    <property type="term" value="P:detection of chemical stimulus involved in sensory perception of taste"/>
    <property type="evidence" value="ECO:0000250"/>
    <property type="project" value="UniProtKB"/>
</dbReference>
<dbReference type="GO" id="GO:0050982">
    <property type="term" value="P:detection of mechanical stimulus"/>
    <property type="evidence" value="ECO:0000318"/>
    <property type="project" value="GO_Central"/>
</dbReference>
<dbReference type="GO" id="GO:0098662">
    <property type="term" value="P:inorganic cation transmembrane transport"/>
    <property type="evidence" value="ECO:0000314"/>
    <property type="project" value="UniProtKB"/>
</dbReference>
<dbReference type="GO" id="GO:0098655">
    <property type="term" value="P:monoatomic cation transmembrane transport"/>
    <property type="evidence" value="ECO:0000314"/>
    <property type="project" value="UniProtKB"/>
</dbReference>
<dbReference type="GO" id="GO:0006812">
    <property type="term" value="P:monoatomic cation transport"/>
    <property type="evidence" value="ECO:0000250"/>
    <property type="project" value="BHF-UCL"/>
</dbReference>
<dbReference type="GO" id="GO:0071805">
    <property type="term" value="P:potassium ion transmembrane transport"/>
    <property type="evidence" value="ECO:0000314"/>
    <property type="project" value="BHF-UCL"/>
</dbReference>
<dbReference type="GO" id="GO:0051289">
    <property type="term" value="P:protein homotetramerization"/>
    <property type="evidence" value="ECO:0000314"/>
    <property type="project" value="UniProtKB"/>
</dbReference>
<dbReference type="GO" id="GO:0009415">
    <property type="term" value="P:response to water"/>
    <property type="evidence" value="ECO:0007669"/>
    <property type="project" value="Ensembl"/>
</dbReference>
<dbReference type="GO" id="GO:0050915">
    <property type="term" value="P:sensory perception of sour taste"/>
    <property type="evidence" value="ECO:0000315"/>
    <property type="project" value="UniProtKB"/>
</dbReference>
<dbReference type="GO" id="GO:0007224">
    <property type="term" value="P:smoothened signaling pathway"/>
    <property type="evidence" value="ECO:0000250"/>
    <property type="project" value="UniProtKB"/>
</dbReference>
<dbReference type="GO" id="GO:0035725">
    <property type="term" value="P:sodium ion transmembrane transport"/>
    <property type="evidence" value="ECO:0000314"/>
    <property type="project" value="BHF-UCL"/>
</dbReference>
<dbReference type="FunFam" id="1.10.287.70:FF:000055">
    <property type="entry name" value="Polycystic kidney disease 2-like 1"/>
    <property type="match status" value="1"/>
</dbReference>
<dbReference type="FunFam" id="1.20.120.350:FF:000052">
    <property type="entry name" value="polycystic kidney disease 2-like 1 protein isoform X1"/>
    <property type="match status" value="1"/>
</dbReference>
<dbReference type="FunFam" id="1.10.238.10:FF:000259">
    <property type="entry name" value="Polycystin 2 like 1, transient receptor potential cation channel"/>
    <property type="match status" value="1"/>
</dbReference>
<dbReference type="FunFam" id="1.20.5.340:FF:000037">
    <property type="entry name" value="Polycystin 2 like 1, transient receptor potential cation channel"/>
    <property type="match status" value="1"/>
</dbReference>
<dbReference type="Gene3D" id="1.10.287.70">
    <property type="match status" value="1"/>
</dbReference>
<dbReference type="Gene3D" id="1.20.5.340">
    <property type="match status" value="1"/>
</dbReference>
<dbReference type="Gene3D" id="1.10.238.10">
    <property type="entry name" value="EF-hand"/>
    <property type="match status" value="1"/>
</dbReference>
<dbReference type="Gene3D" id="1.20.120.350">
    <property type="entry name" value="Voltage-gated potassium channels. Chain C"/>
    <property type="match status" value="1"/>
</dbReference>
<dbReference type="InterPro" id="IPR013122">
    <property type="entry name" value="PKD1_2_channel"/>
</dbReference>
<dbReference type="InterPro" id="IPR003915">
    <property type="entry name" value="PKD_2"/>
</dbReference>
<dbReference type="InterPro" id="IPR051223">
    <property type="entry name" value="Polycystin"/>
</dbReference>
<dbReference type="InterPro" id="IPR046791">
    <property type="entry name" value="Polycystin_dom"/>
</dbReference>
<dbReference type="InterPro" id="IPR027359">
    <property type="entry name" value="Volt_channel_dom_sf"/>
</dbReference>
<dbReference type="PANTHER" id="PTHR10877">
    <property type="entry name" value="POLYCYSTIN FAMILY MEMBER"/>
    <property type="match status" value="1"/>
</dbReference>
<dbReference type="PANTHER" id="PTHR10877:SF196">
    <property type="entry name" value="POLYCYSTIN-2-LIKE PROTEIN 1"/>
    <property type="match status" value="1"/>
</dbReference>
<dbReference type="Pfam" id="PF18109">
    <property type="entry name" value="Fer4_24"/>
    <property type="match status" value="1"/>
</dbReference>
<dbReference type="Pfam" id="PF08016">
    <property type="entry name" value="PKD_channel"/>
    <property type="match status" value="1"/>
</dbReference>
<dbReference type="Pfam" id="PF20519">
    <property type="entry name" value="Polycystin_dom"/>
    <property type="match status" value="1"/>
</dbReference>
<dbReference type="PRINTS" id="PR01433">
    <property type="entry name" value="POLYCYSTIN2"/>
</dbReference>
<dbReference type="SUPFAM" id="SSF81324">
    <property type="entry name" value="Voltage-gated potassium channels"/>
    <property type="match status" value="1"/>
</dbReference>
<reference key="1">
    <citation type="journal article" date="1998" name="J. Biol. Chem.">
        <title>Identification of PKDL, a novel polycystic kidney disease 2-like gene whose murine homologue is deleted in mice with kidney and retinal defects.</title>
        <authorList>
            <person name="Nomura H."/>
            <person name="Turco A.E."/>
            <person name="Pei Y."/>
            <person name="Kalaydjieva L."/>
            <person name="Schiavello T."/>
            <person name="Weremowicz S."/>
            <person name="Ji W."/>
            <person name="Morton C.C."/>
            <person name="Meisler M."/>
            <person name="Reeders S.T."/>
            <person name="Zhou J."/>
        </authorList>
    </citation>
    <scope>NUCLEOTIDE SEQUENCE [MRNA] (ISOFORM 1)</scope>
    <scope>TISSUE SPECIFICITY</scope>
    <scope>VARIANT ILE-393</scope>
    <source>
        <tissue>Retina</tissue>
    </source>
</reference>
<reference key="2">
    <citation type="journal article" date="2000" name="Mamm. Genome">
        <title>The human polycystic kidney disease 2-like (PKDL) gene: exon/intron structure and evidence for a novel splicing mechanism.</title>
        <authorList>
            <person name="Guo L."/>
            <person name="Chen M."/>
            <person name="Basora N."/>
            <person name="Zhou J."/>
        </authorList>
    </citation>
    <scope>NUCLEOTIDE SEQUENCE [GENOMIC DNA] (ISOFORMS 1; 2; 3 AND 4)</scope>
</reference>
<reference key="3">
    <citation type="journal article" date="2004" name="Nature">
        <title>The DNA sequence and comparative analysis of human chromosome 10.</title>
        <authorList>
            <person name="Deloukas P."/>
            <person name="Earthrowl M.E."/>
            <person name="Grafham D.V."/>
            <person name="Rubenfield M."/>
            <person name="French L."/>
            <person name="Steward C.A."/>
            <person name="Sims S.K."/>
            <person name="Jones M.C."/>
            <person name="Searle S."/>
            <person name="Scott C."/>
            <person name="Howe K."/>
            <person name="Hunt S.E."/>
            <person name="Andrews T.D."/>
            <person name="Gilbert J.G.R."/>
            <person name="Swarbreck D."/>
            <person name="Ashurst J.L."/>
            <person name="Taylor A."/>
            <person name="Battles J."/>
            <person name="Bird C.P."/>
            <person name="Ainscough R."/>
            <person name="Almeida J.P."/>
            <person name="Ashwell R.I.S."/>
            <person name="Ambrose K.D."/>
            <person name="Babbage A.K."/>
            <person name="Bagguley C.L."/>
            <person name="Bailey J."/>
            <person name="Banerjee R."/>
            <person name="Bates K."/>
            <person name="Beasley H."/>
            <person name="Bray-Allen S."/>
            <person name="Brown A.J."/>
            <person name="Brown J.Y."/>
            <person name="Burford D.C."/>
            <person name="Burrill W."/>
            <person name="Burton J."/>
            <person name="Cahill P."/>
            <person name="Camire D."/>
            <person name="Carter N.P."/>
            <person name="Chapman J.C."/>
            <person name="Clark S.Y."/>
            <person name="Clarke G."/>
            <person name="Clee C.M."/>
            <person name="Clegg S."/>
            <person name="Corby N."/>
            <person name="Coulson A."/>
            <person name="Dhami P."/>
            <person name="Dutta I."/>
            <person name="Dunn M."/>
            <person name="Faulkner L."/>
            <person name="Frankish A."/>
            <person name="Frankland J.A."/>
            <person name="Garner P."/>
            <person name="Garnett J."/>
            <person name="Gribble S."/>
            <person name="Griffiths C."/>
            <person name="Grocock R."/>
            <person name="Gustafson E."/>
            <person name="Hammond S."/>
            <person name="Harley J.L."/>
            <person name="Hart E."/>
            <person name="Heath P.D."/>
            <person name="Ho T.P."/>
            <person name="Hopkins B."/>
            <person name="Horne J."/>
            <person name="Howden P.J."/>
            <person name="Huckle E."/>
            <person name="Hynds C."/>
            <person name="Johnson C."/>
            <person name="Johnson D."/>
            <person name="Kana A."/>
            <person name="Kay M."/>
            <person name="Kimberley A.M."/>
            <person name="Kershaw J.K."/>
            <person name="Kokkinaki M."/>
            <person name="Laird G.K."/>
            <person name="Lawlor S."/>
            <person name="Lee H.M."/>
            <person name="Leongamornlert D.A."/>
            <person name="Laird G."/>
            <person name="Lloyd C."/>
            <person name="Lloyd D.M."/>
            <person name="Loveland J."/>
            <person name="Lovell J."/>
            <person name="McLaren S."/>
            <person name="McLay K.E."/>
            <person name="McMurray A."/>
            <person name="Mashreghi-Mohammadi M."/>
            <person name="Matthews L."/>
            <person name="Milne S."/>
            <person name="Nickerson T."/>
            <person name="Nguyen M."/>
            <person name="Overton-Larty E."/>
            <person name="Palmer S.A."/>
            <person name="Pearce A.V."/>
            <person name="Peck A.I."/>
            <person name="Pelan S."/>
            <person name="Phillimore B."/>
            <person name="Porter K."/>
            <person name="Rice C.M."/>
            <person name="Rogosin A."/>
            <person name="Ross M.T."/>
            <person name="Sarafidou T."/>
            <person name="Sehra H.K."/>
            <person name="Shownkeen R."/>
            <person name="Skuce C.D."/>
            <person name="Smith M."/>
            <person name="Standring L."/>
            <person name="Sycamore N."/>
            <person name="Tester J."/>
            <person name="Thorpe A."/>
            <person name="Torcasso W."/>
            <person name="Tracey A."/>
            <person name="Tromans A."/>
            <person name="Tsolas J."/>
            <person name="Wall M."/>
            <person name="Walsh J."/>
            <person name="Wang H."/>
            <person name="Weinstock K."/>
            <person name="West A.P."/>
            <person name="Willey D.L."/>
            <person name="Whitehead S.L."/>
            <person name="Wilming L."/>
            <person name="Wray P.W."/>
            <person name="Young L."/>
            <person name="Chen Y."/>
            <person name="Lovering R.C."/>
            <person name="Moschonas N.K."/>
            <person name="Siebert R."/>
            <person name="Fechtel K."/>
            <person name="Bentley D."/>
            <person name="Durbin R.M."/>
            <person name="Hubbard T."/>
            <person name="Doucette-Stamm L."/>
            <person name="Beck S."/>
            <person name="Smith D.R."/>
            <person name="Rogers J."/>
        </authorList>
    </citation>
    <scope>NUCLEOTIDE SEQUENCE [LARGE SCALE GENOMIC DNA]</scope>
</reference>
<reference key="4">
    <citation type="submission" date="2005-09" db="EMBL/GenBank/DDBJ databases">
        <authorList>
            <person name="Mural R.J."/>
            <person name="Istrail S."/>
            <person name="Sutton G.G."/>
            <person name="Florea L."/>
            <person name="Halpern A.L."/>
            <person name="Mobarry C.M."/>
            <person name="Lippert R."/>
            <person name="Walenz B."/>
            <person name="Shatkay H."/>
            <person name="Dew I."/>
            <person name="Miller J.R."/>
            <person name="Flanigan M.J."/>
            <person name="Edwards N.J."/>
            <person name="Bolanos R."/>
            <person name="Fasulo D."/>
            <person name="Halldorsson B.V."/>
            <person name="Hannenhalli S."/>
            <person name="Turner R."/>
            <person name="Yooseph S."/>
            <person name="Lu F."/>
            <person name="Nusskern D.R."/>
            <person name="Shue B.C."/>
            <person name="Zheng X.H."/>
            <person name="Zhong F."/>
            <person name="Delcher A.L."/>
            <person name="Huson D.H."/>
            <person name="Kravitz S.A."/>
            <person name="Mouchard L."/>
            <person name="Reinert K."/>
            <person name="Remington K.A."/>
            <person name="Clark A.G."/>
            <person name="Waterman M.S."/>
            <person name="Eichler E.E."/>
            <person name="Adams M.D."/>
            <person name="Hunkapiller M.W."/>
            <person name="Myers E.W."/>
            <person name="Venter J.C."/>
        </authorList>
    </citation>
    <scope>NUCLEOTIDE SEQUENCE [LARGE SCALE GENOMIC DNA]</scope>
</reference>
<reference key="5">
    <citation type="journal article" date="2004" name="Genome Res.">
        <title>The status, quality, and expansion of the NIH full-length cDNA project: the Mammalian Gene Collection (MGC).</title>
        <authorList>
            <consortium name="The MGC Project Team"/>
        </authorList>
    </citation>
    <scope>NUCLEOTIDE SEQUENCE [LARGE SCALE MRNA] (ISOFORM 1)</scope>
    <source>
        <tissue>Brain</tissue>
    </source>
</reference>
<reference key="6">
    <citation type="journal article" date="1998" name="Genomics">
        <title>Identification of PKD2L, a human PKD2-related gene: tissue-specific expression and mapping to chromosome 10q25.</title>
        <authorList>
            <person name="Wu G."/>
            <person name="Hayashi T."/>
            <person name="Park J.-H."/>
            <person name="Dixit M."/>
            <person name="Reynolds D.M."/>
            <person name="Li L."/>
            <person name="Maeda Y."/>
            <person name="Cai Y."/>
            <person name="Coca-Prados M."/>
            <person name="Somlo S."/>
        </authorList>
    </citation>
    <scope>NUCLEOTIDE SEQUENCE [MRNA] OF 96-805 (ISOFORM 1)</scope>
    <scope>TISSUE SPECIFICITY</scope>
    <source>
        <tissue>Retina</tissue>
    </source>
</reference>
<reference key="7">
    <citation type="journal article" date="1999" name="Eur. J. Hum. Genet.">
        <title>Genes homologous to the autosomal dominant polycystic kidney disease genes (PKD1 and PKD2).</title>
        <authorList>
            <person name="Veldhuisen B."/>
            <person name="Spruit L."/>
            <person name="Dauwerse H.G."/>
            <person name="Breuning M.H."/>
            <person name="Peters D.J.M."/>
        </authorList>
    </citation>
    <scope>NUCLEOTIDE SEQUENCE [MRNA] OF 43-805 (ISOFORMS 1 AND 4)</scope>
    <source>
        <tissue>Testis</tissue>
    </source>
</reference>
<reference key="8">
    <citation type="journal article" date="1999" name="Nature">
        <title>Polycystin-L is a calcium-regulated cation channel permeable to calcium ions.</title>
        <authorList>
            <person name="Chen X.-Z."/>
            <person name="Vassilev P.M."/>
            <person name="Basora N."/>
            <person name="Peng J.-B."/>
            <person name="Nomura H."/>
            <person name="Segal Y."/>
            <person name="Brown E.M."/>
            <person name="Reeders S.T."/>
            <person name="Hediger M.A."/>
            <person name="Zhou J."/>
        </authorList>
    </citation>
    <scope>FUNCTION</scope>
    <scope>TRANSPORTER ACTIVITY</scope>
    <scope>ACTIVITY REGULATION</scope>
    <scope>SUBCELLULAR LOCATION</scope>
</reference>
<reference key="9">
    <citation type="journal article" date="2002" name="FEBS Lett.">
        <title>The calcium-binding EF-hand in polycystin-L is not a domain for channel activation and ensuing inactivation.</title>
        <authorList>
            <person name="Li Q."/>
            <person name="Liu Y."/>
            <person name="Zhao W."/>
            <person name="Chen X.Z."/>
        </authorList>
    </citation>
    <scope>ALTERNATIVE SPLICING (ISOFORMS 2 AND 5)</scope>
    <scope>FUNCTION</scope>
    <scope>TRANSPORTER ACTIVITY</scope>
    <scope>SUBCELLULAR LOCATION</scope>
    <scope>DOMAIN</scope>
</reference>
<reference key="10">
    <citation type="journal article" date="2009" name="PLoS ONE">
        <title>Sour ageusia in two individuals implicates ion channels of the ASIC and PKD families in human sour taste perception at the anterior tongue.</title>
        <authorList>
            <person name="Huque T."/>
            <person name="Cowart B.J."/>
            <person name="Dankulich-Nagrudny L."/>
            <person name="Pribitkin E.A."/>
            <person name="Bayley D.L."/>
            <person name="Spielman A.I."/>
            <person name="Feldman R.S."/>
            <person name="Mackler S.A."/>
            <person name="Brand J.G."/>
        </authorList>
    </citation>
    <scope>FUNCTION</scope>
    <scope>TISSUE SPECIFICITY</scope>
</reference>
<reference key="11">
    <citation type="journal article" date="2012" name="J. Biol. Chem.">
        <title>Receptor for activated C kinase 1 (RACK1) inhibits function of transient receptor potential (TRP)-type channel Pkd2L1 through physical interaction.</title>
        <authorList>
            <person name="Yang J."/>
            <person name="Wang Q."/>
            <person name="Zheng W."/>
            <person name="Tuli J."/>
            <person name="Li Q."/>
            <person name="Wu Y."/>
            <person name="Hussein S."/>
            <person name="Dai X.Q."/>
            <person name="Shafiei S."/>
            <person name="Li X.G."/>
            <person name="Shen P.Y."/>
            <person name="Tu J.C."/>
            <person name="Chen X.Z."/>
        </authorList>
    </citation>
    <scope>INTERACTION WITH RACK1</scope>
</reference>
<reference key="12">
    <citation type="journal article" date="2013" name="Nature">
        <title>Direct recording and molecular identification of the calcium channel of primary cilia.</title>
        <authorList>
            <person name="DeCaen P.G."/>
            <person name="Delling M."/>
            <person name="Vien T.N."/>
            <person name="Clapham D.E."/>
        </authorList>
    </citation>
    <scope>FUNCTION</scope>
    <scope>TRANSPORTER ACTIVITY</scope>
    <scope>SUBUNIT</scope>
    <scope>INTERACTION WITH PKD1L1</scope>
    <scope>SUBCELLULAR LOCATION</scope>
    <scope>MUTAGENESIS OF 523-GLU--GLU-525</scope>
</reference>
<reference key="13">
    <citation type="journal article" date="2015" name="Eur. Biophys. J.">
        <title>PKD2L1/PKD1L3 channel complex with an alkali-activated mechanism and calcium-dependent inactivation.</title>
        <authorList>
            <person name="Chen P."/>
            <person name="Wu J.Z."/>
            <person name="Zhao J."/>
            <person name="Wang P."/>
            <person name="Luo J."/>
            <person name="Yang W."/>
            <person name="Liu X.D."/>
        </authorList>
    </citation>
    <scope>ACTIVITY REGULATION</scope>
</reference>
<reference key="14">
    <citation type="journal article" date="2015" name="Sci. Rep.">
        <title>A novel PKD2L1 C-terminal domain critical for trimerization and channel function.</title>
        <authorList>
            <person name="Zheng W."/>
            <person name="Hussein S."/>
            <person name="Yang J."/>
            <person name="Huang J."/>
            <person name="Zhang F."/>
            <person name="Hernandez-Anzaldo S."/>
            <person name="Fernandez-Patron C."/>
            <person name="Cao Y."/>
            <person name="Zeng H."/>
            <person name="Tang J."/>
            <person name="Chen X.Z."/>
        </authorList>
    </citation>
    <scope>FUNCTION</scope>
    <scope>TRANSPORTER ACTIVITY</scope>
    <scope>SUBCELLULAR LOCATION</scope>
    <scope>SUBUNIT</scope>
    <scope>INTERACTION WITH PKD1L3</scope>
    <scope>MUTAGENESIS OF 2-ASN--TYR-96; 566-GLU--SER-805; 581-SER--SER-805 AND 622-THR--SER-805</scope>
</reference>
<reference key="15">
    <citation type="journal article" date="2016" name="J. Biol. Chem.">
        <title>Regulation of TRPP3 Channel Function by N-terminal Domain Palmitoylation and Phosphorylation.</title>
        <authorList>
            <person name="Zheng W."/>
            <person name="Yang J."/>
            <person name="Beauchamp E."/>
            <person name="Cai R."/>
            <person name="Hussein S."/>
            <person name="Hofmann L."/>
            <person name="Li Q."/>
            <person name="Flockerzi V."/>
            <person name="Berthiaume L.G."/>
            <person name="Tang J."/>
            <person name="Chen X.Z."/>
        </authorList>
    </citation>
    <scope>FUNCTION</scope>
    <scope>TRANSPORTER ACTIVITY</scope>
    <scope>SUBCELLULAR LOCATION</scope>
    <scope>PALMITOYLATION AT CYS-38</scope>
    <scope>MUTAGENESIS OF 2-ASN--ARG-36; 2-ASN--CYS-38; CYS-38; THR-39; 594-ARG--LYS-599; ARG-594; ARG-596; ARG-598 AND LYS-599</scope>
</reference>
<reference key="16">
    <citation type="journal article" date="2018" name="Cell Rep.">
        <title>Direct Binding between Pre-S1 and TRP-like Domains in TRPP Channels Mediates Gating and Functional Regulation by PIP2.</title>
        <authorList>
            <person name="Zheng W."/>
            <person name="Cai R."/>
            <person name="Hofmann L."/>
            <person name="Nesin V."/>
            <person name="Hu Q."/>
            <person name="Long W."/>
            <person name="Fatehi M."/>
            <person name="Liu X."/>
            <person name="Hussein S."/>
            <person name="Kong T."/>
            <person name="Li J."/>
            <person name="Light P.E."/>
            <person name="Tang J."/>
            <person name="Flockerzi V."/>
            <person name="Tsiokas L."/>
            <person name="Chen X.Z."/>
        </authorList>
    </citation>
    <scope>FUNCTION</scope>
    <scope>TRANSPORTER ACTIVITY</scope>
    <scope>DOMAIN</scope>
    <scope>ACTIVITY REGULATION</scope>
    <scope>MUTAGENESIS OF 81-TRP--LEU-95; TRP-81 AND LYS-568</scope>
</reference>
<reference key="17">
    <citation type="journal article" date="2012" name="Biochim. Biophys. Acta">
        <title>Crystal structure and characterization of coiled-coil domain of the transient receptor potential channel PKD2L1.</title>
        <authorList>
            <person name="Molland K.L."/>
            <person name="Paul L.N."/>
            <person name="Yernool D.A."/>
        </authorList>
    </citation>
    <scope>X-RAY CRYSTALLOGRAPHY (2.69 ANGSTROMS) OF 699-737</scope>
    <scope>SUBUNIT</scope>
    <scope>FUNCTION</scope>
    <scope>MUTAGENESIS OF LEU-710; VAL-714; LEU-717; ILE-728; VAL-731 AND LEU-735</scope>
</reference>
<reference evidence="27" key="18">
    <citation type="journal article" date="2012" name="Nat. Commun.">
        <title>Molecular mechanism of the assembly of an acid-sensing receptor ion channel complex.</title>
        <authorList>
            <person name="Yu Y."/>
            <person name="Ulbrich M.H."/>
            <person name="Li M.H."/>
            <person name="Dobbins S."/>
            <person name="Zhang W.K."/>
            <person name="Tong L."/>
            <person name="Isacoff E.Y."/>
            <person name="Yang J."/>
        </authorList>
    </citation>
    <scope>X-RAY CRYSTALLOGRAPHY (2.8 ANGSTROMS) OF 699-743</scope>
    <scope>FUNCTION</scope>
    <scope>TRANSPORTER ACTIVITY</scope>
    <scope>ACTIVITY REGULATION</scope>
    <scope>SUBUNIT</scope>
    <scope>SUBCELLULAR LOCATION</scope>
    <scope>MUTAGENESIS OF ASP-523 AND ASP-525</scope>
</reference>
<reference evidence="28" key="19">
    <citation type="journal article" date="2018" name="Elife">
        <title>Cryo-EM structure of the polycystin 2-l1 ion channel.</title>
        <authorList>
            <person name="Hulse R.E."/>
            <person name="Li Z."/>
            <person name="Huang R.K."/>
            <person name="Zhang J."/>
            <person name="Clapham D.E."/>
        </authorList>
    </citation>
    <scope>STRUCTURE BY ELECTRON MICROSCOPY (3.11 ANGSTROMS)</scope>
    <scope>FUNCTION</scope>
    <scope>SUBUNIT</scope>
    <scope>TOPOLOGY</scope>
    <scope>GLYCOSYLATION AT ASN-207</scope>
    <scope>DISULFIDE BOND</scope>
</reference>
<name>PK2L1_HUMAN</name>
<evidence type="ECO:0000250" key="1">
    <source>
        <dbReference type="UniProtKB" id="A2A259"/>
    </source>
</evidence>
<evidence type="ECO:0000255" key="2"/>
<evidence type="ECO:0000256" key="3">
    <source>
        <dbReference type="SAM" id="MobiDB-lite"/>
    </source>
</evidence>
<evidence type="ECO:0000269" key="4">
    <source>
    </source>
</evidence>
<evidence type="ECO:0000269" key="5">
    <source>
    </source>
</evidence>
<evidence type="ECO:0000269" key="6">
    <source>
    </source>
</evidence>
<evidence type="ECO:0000269" key="7">
    <source>
    </source>
</evidence>
<evidence type="ECO:0000269" key="8">
    <source>
    </source>
</evidence>
<evidence type="ECO:0000269" key="9">
    <source>
    </source>
</evidence>
<evidence type="ECO:0000269" key="10">
    <source>
    </source>
</evidence>
<evidence type="ECO:0000269" key="11">
    <source>
    </source>
</evidence>
<evidence type="ECO:0000269" key="12">
    <source>
    </source>
</evidence>
<evidence type="ECO:0000269" key="13">
    <source>
    </source>
</evidence>
<evidence type="ECO:0000269" key="14">
    <source>
    </source>
</evidence>
<evidence type="ECO:0000269" key="15">
    <source>
    </source>
</evidence>
<evidence type="ECO:0000269" key="16">
    <source>
    </source>
</evidence>
<evidence type="ECO:0000269" key="17">
    <source>
    </source>
</evidence>
<evidence type="ECO:0000303" key="18">
    <source>
    </source>
</evidence>
<evidence type="ECO:0000303" key="19">
    <source>
    </source>
</evidence>
<evidence type="ECO:0000303" key="20">
    <source>
    </source>
</evidence>
<evidence type="ECO:0000303" key="21">
    <source>
    </source>
</evidence>
<evidence type="ECO:0000303" key="22">
    <source>
    </source>
</evidence>
<evidence type="ECO:0000305" key="23"/>
<evidence type="ECO:0000305" key="24">
    <source>
    </source>
</evidence>
<evidence type="ECO:0000305" key="25">
    <source>
    </source>
</evidence>
<evidence type="ECO:0000312" key="26">
    <source>
        <dbReference type="HGNC" id="HGNC:9011"/>
    </source>
</evidence>
<evidence type="ECO:0007744" key="27">
    <source>
        <dbReference type="PDB" id="4GIF"/>
    </source>
</evidence>
<evidence type="ECO:0007744" key="28">
    <source>
        <dbReference type="PDB" id="6DU8"/>
    </source>
</evidence>
<evidence type="ECO:0007829" key="29">
    <source>
        <dbReference type="PDB" id="3TE3"/>
    </source>
</evidence>
<evidence type="ECO:0007829" key="30">
    <source>
        <dbReference type="PDB" id="4GIF"/>
    </source>
</evidence>
<evidence type="ECO:0007829" key="31">
    <source>
        <dbReference type="PDB" id="6DU8"/>
    </source>
</evidence>
<organism>
    <name type="scientific">Homo sapiens</name>
    <name type="common">Human</name>
    <dbReference type="NCBI Taxonomy" id="9606"/>
    <lineage>
        <taxon>Eukaryota</taxon>
        <taxon>Metazoa</taxon>
        <taxon>Chordata</taxon>
        <taxon>Craniata</taxon>
        <taxon>Vertebrata</taxon>
        <taxon>Euteleostomi</taxon>
        <taxon>Mammalia</taxon>
        <taxon>Eutheria</taxon>
        <taxon>Euarchontoglires</taxon>
        <taxon>Primates</taxon>
        <taxon>Haplorrhini</taxon>
        <taxon>Catarrhini</taxon>
        <taxon>Hominidae</taxon>
        <taxon>Homo</taxon>
    </lineage>
</organism>
<accession>Q9P0L9</accession>
<accession>O75972</accession>
<accession>Q5W039</accession>
<accession>Q9UP35</accession>
<accession>Q9UPA2</accession>
<comment type="function">
    <text evidence="1 4 5 6 9 10 11 13 14 15">Homotetrameric, non-selective cation channel that is permeable to sodium, potassium, magnesium and calcium (PubMed:10517637, PubMed:11959145, PubMed:25820328, PubMed:27754867, PubMed:29425510, PubMed:30004384). Also forms functionnal heteromeric channels with PKD1, PKD1L1 and PKD1L3 (PubMed:23212381, PubMed:24336289). Pore-forming subunit of a heterotetrameric, non-selective cation channel, formed by PKD1L2 and PKD1L3, that is permeable to sodium, potassium, magnesium and calcium and which may act as a sour taste receptor in gustatory cells; however, its contribution to sour taste perception is unclear in vivo and may be indirect (PubMed:19812697, PubMed:23212381). The homomeric and heteromeric channels formed by PKD1L2 and PKD1L3 are activated by low pH and Ca(2+), but opens only when the extracellular pH rises again and after the removal of acid stimulus (PubMed:23212381). Pore-forming subunit of a calcium-permeant ion channel formed by PKD1L2 and PKD1L1 in primary cilia, where it controls cilium calcium concentration, without affecting cytoplasmic calcium concentration, and regulates sonic hedgehog/SHH signaling and GLI2 transcription (PubMed:24336289). The PKD1L1:PKD2L1 complex channel is mechanosensitive only at high pressures and is highly temperature sensitive (PubMed:24336289). Pore-forming subunit of a calcium-permeant ion channel formed by PKD1L2 and PKD1 that produces a transient increase in intracellular calcium concentration upon hypo-osmotic stimulation (200 mOsm) (By similarity). May play a role in the perception of carbonation taste (By similarity). May play a role in the sensory perception of water, via a mechanism that activates the channel in response to dilution of salivary bicarbonate and changes in salivary pH (By similarity).</text>
</comment>
<comment type="catalytic activity">
    <reaction evidence="4 5 10 11 13">
        <text>Ca(2+)(in) = Ca(2+)(out)</text>
        <dbReference type="Rhea" id="RHEA:29671"/>
        <dbReference type="ChEBI" id="CHEBI:29108"/>
    </reaction>
</comment>
<comment type="catalytic activity">
    <reaction evidence="4 5 9 14">
        <text>Na(+)(in) = Na(+)(out)</text>
        <dbReference type="Rhea" id="RHEA:34963"/>
        <dbReference type="ChEBI" id="CHEBI:29101"/>
    </reaction>
</comment>
<comment type="catalytic activity">
    <reaction evidence="4 5 9">
        <text>K(+)(in) = K(+)(out)</text>
        <dbReference type="Rhea" id="RHEA:29463"/>
        <dbReference type="ChEBI" id="CHEBI:29103"/>
    </reaction>
</comment>
<comment type="catalytic activity">
    <reaction evidence="5 9">
        <text>Mg(2+)(in) = Mg(2+)(out)</text>
        <dbReference type="Rhea" id="RHEA:29827"/>
        <dbReference type="ChEBI" id="CHEBI:18420"/>
    </reaction>
</comment>
<comment type="activity regulation">
    <text evidence="4 9 12 14">The non-selective cation channel is gated following an off-response property by acid: gated open after the removal of acid stimulus, but not during acid application (PubMed:23212381). Channel activity is inhibited by phosphatidylinositol-4,5-bisphosphate (PIP2) (PubMed:29425510). Non-selective cation channel activity is substantially increased when either the extracellular or intracellular calcium-ion concentration is raised (PubMed:10517637). Regulation of non-selective cation channel activity by external calcium is bimodal, first sensitizing and subsequently inactivating the current (PubMed:26066678).</text>
</comment>
<comment type="subunit">
    <text evidence="1 7 8 9 10 11 15">Oligomer (PubMed:25820328). Functional PKD2L1 homotetramer can be formed either through C-terminal trimerization followed by N-terminal dimerization of a fourth subunit with a subunit in the trimer or through dimerization followed by trimerization (PubMed:25820328, PubMed:30004384). Heterotetramer with either PKD1L1, PKD1L3 or PKD1; the heterotetrameric complex contains three PKD1L2 chains plus one chain from another family member (PubMed:23212381, PubMed:25820328). Interacts with PKD1L1, forming a ciliary calcium channel (PubMed:24336289). Interacts with PKD1L3, forming a cation channel that is activated by low extracellular pH (PubMed:23212381, PubMed:25820328). Interacts with PKD1; this heteromeric functional cation channels is opened by hypo-osmotic stimulation (By similarity). Interacts with RACK1; inhibits the channel activity possibly by impairing localization to the cell membrane (PubMed:22174419).</text>
</comment>
<comment type="interaction">
    <interactant intactId="EBI-7956847">
        <id>Q9P0L9</id>
    </interactant>
    <interactant intactId="EBI-12256978">
        <id>Q8N6F1-2</id>
        <label>CLDN19</label>
    </interactant>
    <organismsDiffer>false</organismsDiffer>
    <experiments>3</experiments>
</comment>
<comment type="subcellular location">
    <subcellularLocation>
        <location evidence="10">Cell projection</location>
        <location evidence="10">Cilium membrane</location>
        <topology evidence="15">Multi-pass membrane protein</topology>
    </subcellularLocation>
    <subcellularLocation>
        <location evidence="4 5 9 11 13 14">Cell membrane</location>
        <topology evidence="15">Multi-pass membrane protein</topology>
    </subcellularLocation>
    <subcellularLocation>
        <location evidence="1">Cytoplasmic vesicle</location>
    </subcellularLocation>
    <text evidence="1 9">Interaction with PKD1L3 is required for localization to the cell membrane (PubMed:23212381). Interaction with PKD1 is required for localization to the cell membrane (By similarity).</text>
</comment>
<comment type="alternative products">
    <event type="alternative splicing"/>
    <isoform>
        <id>Q9P0L9-1</id>
        <name>1</name>
        <sequence type="displayed"/>
    </isoform>
    <isoform>
        <id>Q9P0L9-2</id>
        <name>2</name>
        <name>PKDLdel15</name>
        <name>PCL-TS</name>
        <name>Testis isoform</name>
        <sequence type="described" ref="VSP_004730 VSP_004731"/>
    </isoform>
    <isoform>
        <id>Q9P0L9-3</id>
        <name>3</name>
        <name>PKDLdel5</name>
        <sequence type="described" ref="VSP_004729"/>
    </isoform>
    <isoform>
        <id>Q9P0L9-4</id>
        <name>4</name>
        <name>PKDLdel456</name>
        <sequence type="described" ref="VSP_004728"/>
    </isoform>
    <isoform>
        <id>Q9P0L9-5</id>
        <name>5</name>
        <name>PCL-LV</name>
        <name>Liver isoform</name>
        <sequence type="described" ref="VSP_053718"/>
    </isoform>
    <text>Additional isoforms seem to exist.</text>
</comment>
<comment type="tissue specificity">
    <text evidence="6 16 17">Detected in taste bud cells in fungiform papillae (at protein level) (PubMed:19812697). Ubiquitous (PubMed:9748274). Expressed in adult heart, skeletal muscle, brain, spleen, testis, retina and liver (PubMed:9748274, PubMed:9878261). Isoform 4 appears to be expressed only in transformed lymphoblasts.</text>
</comment>
<comment type="domain">
    <text evidence="5">The EF-hand domain is not required for channel activation (PubMed:11959145).</text>
</comment>
<comment type="domain">
    <text evidence="14">Interaction of the cytoplasmic N- and C-terminal domains is important for the non-selective cation channel activity.</text>
</comment>
<comment type="PTM">
    <text evidence="13">Palmitoylation is important for expression at the cell membrane and for channel activity.</text>
</comment>
<comment type="miscellaneous">
    <molecule>Isoform 4</molecule>
    <text evidence="23">Unusual intron exon spliced junction.</text>
</comment>
<comment type="similarity">
    <text evidence="23">Belongs to the polycystin family.</text>
</comment>
<comment type="caution">
    <text evidence="1 24">PKD1L3 and PKD2L1 has been initially identified as sour taste receptor in type III gustatory cells, but its role in sour taste reception is controversial (By similarity). Some data confirm this hypothesis in human: in 2 patients with sour ageusia that are unresponsive to sour stimuli, but show normal responses to bitter, sweet, and salty stimuli, expression of PKD1L3 and PKD2L1 is absent in the anterior part of the tongue (PubMed:19812697). However, a number of experiments have recently shown that the sour taste receptor activity is probably indirect; mice lacking Pkd2l1 only show partial defects in sour taste perception (By similarity).</text>
</comment>
<gene>
    <name evidence="26" type="primary">PKD2L1</name>
    <name type="synonym">PKD2L</name>
    <name evidence="22" type="synonym">PKDL</name>
    <name evidence="20 21" type="synonym">TRPP3</name>
</gene>
<proteinExistence type="evidence at protein level"/>
<feature type="chain" id="PRO_0000164360" description="Polycystin-2-like protein 1">
    <location>
        <begin position="1"/>
        <end position="805"/>
    </location>
</feature>
<feature type="topological domain" description="Cytoplasmic" evidence="25">
    <location>
        <begin position="1"/>
        <end position="103"/>
    </location>
</feature>
<feature type="transmembrane region" description="Helical" evidence="25">
    <location>
        <begin position="104"/>
        <end position="124"/>
    </location>
</feature>
<feature type="topological domain" description="Extracellular" evidence="25">
    <location>
        <begin position="125"/>
        <end position="356"/>
    </location>
</feature>
<feature type="transmembrane region" description="Helical" evidence="25">
    <location>
        <begin position="357"/>
        <end position="376"/>
    </location>
</feature>
<feature type="topological domain" description="Cytoplasmic" evidence="25">
    <location>
        <begin position="377"/>
        <end position="384"/>
    </location>
</feature>
<feature type="transmembrane region" description="Helical" evidence="25">
    <location>
        <begin position="385"/>
        <end position="405"/>
    </location>
</feature>
<feature type="topological domain" description="Extracellular" evidence="25">
    <location>
        <begin position="406"/>
        <end position="433"/>
    </location>
</feature>
<feature type="transmembrane region" description="Helical" evidence="25">
    <location>
        <begin position="434"/>
        <end position="454"/>
    </location>
</feature>
<feature type="topological domain" description="Cytoplasmic" evidence="25">
    <location>
        <begin position="455"/>
        <end position="479"/>
    </location>
</feature>
<feature type="transmembrane region" description="Helical" evidence="25">
    <location>
        <begin position="480"/>
        <end position="499"/>
    </location>
</feature>
<feature type="topological domain" description="Extracellular" evidence="25">
    <location>
        <begin position="500"/>
        <end position="511"/>
    </location>
</feature>
<feature type="intramembrane region" description="Pore-forming" evidence="25">
    <location>
        <begin position="512"/>
        <end position="526"/>
    </location>
</feature>
<feature type="topological domain" description="Extracellular" evidence="25">
    <location>
        <begin position="527"/>
        <end position="536"/>
    </location>
</feature>
<feature type="transmembrane region" description="Helical" evidence="25">
    <location>
        <begin position="537"/>
        <end position="557"/>
    </location>
</feature>
<feature type="topological domain" description="Cytoplasmic" evidence="25">
    <location>
        <begin position="558"/>
        <end position="805"/>
    </location>
</feature>
<feature type="domain" description="EF-hand" evidence="2">
    <location>
        <begin position="633"/>
        <end position="668"/>
    </location>
</feature>
<feature type="region of interest" description="Disordered" evidence="3">
    <location>
        <begin position="1"/>
        <end position="59"/>
    </location>
</feature>
<feature type="region of interest" description="Required for homooligomerization">
    <location>
        <begin position="704"/>
        <end position="763"/>
    </location>
</feature>
<feature type="region of interest" description="Disordered" evidence="3">
    <location>
        <begin position="759"/>
        <end position="805"/>
    </location>
</feature>
<feature type="coiled-coil region" evidence="2">
    <location>
        <begin position="650"/>
        <end position="686"/>
    </location>
</feature>
<feature type="coiled-coil region" evidence="8 9">
    <location>
        <begin position="700"/>
        <end position="740"/>
    </location>
</feature>
<feature type="compositionally biased region" description="Basic and acidic residues" evidence="3">
    <location>
        <begin position="780"/>
        <end position="796"/>
    </location>
</feature>
<feature type="binding site" evidence="1">
    <location>
        <position position="370"/>
    </location>
    <ligand>
        <name>Ca(2+)</name>
        <dbReference type="ChEBI" id="CHEBI:29108"/>
        <note>allosteric activator</note>
    </ligand>
</feature>
<feature type="binding site" evidence="1">
    <location>
        <position position="373"/>
    </location>
    <ligand>
        <name>Ca(2+)</name>
        <dbReference type="ChEBI" id="CHEBI:29108"/>
        <note>allosteric activator</note>
    </ligand>
</feature>
<feature type="binding site" evidence="1">
    <location>
        <position position="387"/>
    </location>
    <ligand>
        <name>Ca(2+)</name>
        <dbReference type="ChEBI" id="CHEBI:29108"/>
        <note>allosteric activator</note>
    </ligand>
</feature>
<feature type="binding site" evidence="1">
    <location>
        <position position="390"/>
    </location>
    <ligand>
        <name>Ca(2+)</name>
        <dbReference type="ChEBI" id="CHEBI:29108"/>
        <note>allosteric activator</note>
    </ligand>
</feature>
<feature type="lipid moiety-binding region" description="S-palmitoyl cysteine" evidence="13">
    <location>
        <position position="38"/>
    </location>
</feature>
<feature type="glycosylation site" description="N-linked (GlcNAc...) asparagine" evidence="2">
    <location>
        <position position="177"/>
    </location>
</feature>
<feature type="glycosylation site" description="N-linked (GlcNAc...) asparagine" evidence="15 28">
    <location>
        <position position="207"/>
    </location>
</feature>
<feature type="glycosylation site" description="N-linked (GlcNAc...) asparagine" evidence="2">
    <location>
        <position position="241"/>
    </location>
</feature>
<feature type="glycosylation site" description="N-linked (GlcNAc...) asparagine" evidence="2">
    <location>
        <position position="505"/>
    </location>
</feature>
<feature type="disulfide bond" evidence="25 28">
    <location>
        <begin position="210"/>
        <end position="223"/>
    </location>
</feature>
<feature type="splice variant" id="VSP_004728" description="In isoform 4." evidence="19">
    <location>
        <begin position="225"/>
        <end position="344"/>
    </location>
</feature>
<feature type="splice variant" id="VSP_004729" description="In isoform 3." evidence="23">
    <location>
        <begin position="245"/>
        <end position="319"/>
    </location>
</feature>
<feature type="splice variant" id="VSP_053718" description="In isoform 5." evidence="23">
    <location>
        <begin position="638"/>
        <end position="666"/>
    </location>
</feature>
<feature type="splice variant" id="VSP_004730" description="In isoform 2." evidence="23">
    <original>KEQAIWKHPQ</original>
    <variation>RFPIKEKRKP</variation>
    <location>
        <begin position="751"/>
        <end position="760"/>
    </location>
</feature>
<feature type="splice variant" id="VSP_004731" description="In isoform 2." evidence="23">
    <location>
        <begin position="761"/>
        <end position="805"/>
    </location>
</feature>
<feature type="sequence variant" id="VAR_050555" description="In dbSNP:rs17112895.">
    <original>R</original>
    <variation>Q</variation>
    <location>
        <position position="278"/>
    </location>
</feature>
<feature type="sequence variant" id="VAR_050556" description="In dbSNP:rs7909153.">
    <original>R</original>
    <variation>W</variation>
    <location>
        <position position="378"/>
    </location>
</feature>
<feature type="sequence variant" id="VAR_024569" description="In dbSNP:rs2278842." evidence="16">
    <original>V</original>
    <variation>I</variation>
    <location>
        <position position="393"/>
    </location>
</feature>
<feature type="sequence variant" id="VAR_024570" description="In dbSNP:rs6584356.">
    <original>R</original>
    <variation>L</variation>
    <location>
        <position position="681"/>
    </location>
</feature>
<feature type="sequence variant" id="VAR_050557" description="In dbSNP:rs12782963.">
    <original>A</original>
    <variation>D</variation>
    <location>
        <position position="788"/>
    </location>
</feature>
<feature type="mutagenesis site" description="Loss of channel activity. No effect on expression at the cell membrane." evidence="11">
    <location>
        <begin position="2"/>
        <end position="96"/>
    </location>
</feature>
<feature type="mutagenesis site" description="Loss of channel activity." evidence="13">
    <location>
        <begin position="2"/>
        <end position="38"/>
    </location>
</feature>
<feature type="mutagenesis site" description="No effect on channel activity." evidence="13">
    <location>
        <begin position="2"/>
        <end position="36"/>
    </location>
</feature>
<feature type="mutagenesis site" description="Strongly decreased channel activity. No effect on expression at the cell membrane. Loss of palmitoylation." evidence="13">
    <original>C</original>
    <variation>A</variation>
    <location>
        <position position="38"/>
    </location>
</feature>
<feature type="mutagenesis site" description="Decreased channel activity." evidence="13">
    <original>T</original>
    <variation>D</variation>
    <variation>E</variation>
    <location>
        <position position="39"/>
    </location>
</feature>
<feature type="mutagenesis site" description="Loss of channel activity." evidence="14">
    <location>
        <begin position="81"/>
        <end position="95"/>
    </location>
</feature>
<feature type="mutagenesis site" description="Loss of channel activity. No effect on expression at the cell membrane." evidence="14">
    <original>W</original>
    <variation>A</variation>
    <variation>K</variation>
    <variation>L</variation>
    <variation>R</variation>
    <location>
        <position position="81"/>
    </location>
</feature>
<feature type="mutagenesis site" description="Abolishes ion channel activity." evidence="10">
    <original>DFD</original>
    <variation>AFA</variation>
    <location>
        <begin position="523"/>
        <end position="525"/>
    </location>
</feature>
<feature type="mutagenesis site" description="Increased permeability of dimethylamine and trimethylamine and decreased permeability of magnesium." evidence="9">
    <original>D</original>
    <variation>Q</variation>
    <location>
        <position position="523"/>
    </location>
</feature>
<feature type="mutagenesis site" description="Increased permeability of dimethylamine and trimethylamine and decreased permeability of magnesium." evidence="9">
    <original>D</original>
    <variation>K</variation>
    <location>
        <position position="525"/>
    </location>
</feature>
<feature type="mutagenesis site" description="Does not affect ion channel activity.">
    <original>D</original>
    <variation>A</variation>
    <location>
        <position position="530"/>
    </location>
</feature>
<feature type="mutagenesis site" description="Loss of channel activity. No effect on expression at the cell membrane." evidence="11">
    <location>
        <begin position="566"/>
        <end position="805"/>
    </location>
</feature>
<feature type="mutagenesis site" description="Loss of channel activity." evidence="14">
    <original>K</original>
    <variation>A</variation>
    <variation>D</variation>
    <variation>E</variation>
    <location>
        <position position="568"/>
    </location>
</feature>
<feature type="mutagenesis site" description="Loss of channel activity. No effect on expression at the cell membrane." evidence="11">
    <location>
        <begin position="581"/>
        <end position="805"/>
    </location>
</feature>
<feature type="mutagenesis site" description="Loss of phosphatidylinositol-4,5-bisphosphate binding." evidence="14">
    <location>
        <begin position="594"/>
        <end position="599"/>
    </location>
</feature>
<feature type="mutagenesis site" description="Increased channel activity." evidence="14">
    <original>R</original>
    <variation>Q</variation>
    <location>
        <position position="594"/>
    </location>
</feature>
<feature type="mutagenesis site" description="Increased channel activity." evidence="14">
    <original>R</original>
    <variation>Q</variation>
    <location>
        <position position="596"/>
    </location>
</feature>
<feature type="mutagenesis site" description="Mildly increased channel activity." evidence="14">
    <original>R</original>
    <variation>Q</variation>
    <location>
        <position position="598"/>
    </location>
</feature>
<feature type="mutagenesis site" description="Mildly increased channel activity." evidence="14">
    <original>K</original>
    <variation>Q</variation>
    <location>
        <position position="599"/>
    </location>
</feature>
<feature type="mutagenesis site" description="No effect on channel activity. No effect on expression at the cell membrane." evidence="11">
    <location>
        <begin position="622"/>
        <end position="805"/>
    </location>
</feature>
<feature type="mutagenesis site" description="Abolishes homooligomer formation; when associated with A-714; A-717; A-728; A-731 and A-735." evidence="8">
    <original>L</original>
    <variation>A</variation>
    <location>
        <position position="710"/>
    </location>
</feature>
<feature type="mutagenesis site" description="Abolishes homooligomer formation; when associated with A-710; A-717; A-728; A-731 and A-735." evidence="8">
    <original>V</original>
    <variation>A</variation>
    <location>
        <position position="714"/>
    </location>
</feature>
<feature type="mutagenesis site" description="Abolishes homooligomer formation; when associated with A-710; A-714; A-728; A-731 and A-735." evidence="8">
    <original>L</original>
    <variation>A</variation>
    <location>
        <position position="717"/>
    </location>
</feature>
<feature type="mutagenesis site" description="Abolishes homooligomer formation; when associated with A-710; A-714; A-717; A-731 and A-735." evidence="8">
    <original>I</original>
    <variation>A</variation>
    <location>
        <position position="728"/>
    </location>
</feature>
<feature type="mutagenesis site" description="Abolishes homooligomer formation; when associated with A-710; A-714; A-717; A-728 and A-735." evidence="8">
    <original>V</original>
    <variation>A</variation>
    <location>
        <position position="731"/>
    </location>
</feature>
<feature type="mutagenesis site" description="Abolishes homooligomer formation; when associated with A-710; A-714; A-717; A-728 and A-731." evidence="8">
    <original>L</original>
    <variation>A</variation>
    <location>
        <position position="735"/>
    </location>
</feature>
<feature type="sequence conflict" description="In Ref. 1; AAD41638." evidence="23" ref="1">
    <original>Q</original>
    <variation>H</variation>
    <location>
        <position position="13"/>
    </location>
</feature>
<feature type="turn" evidence="31">
    <location>
        <begin position="102"/>
        <end position="104"/>
    </location>
</feature>
<feature type="helix" evidence="31">
    <location>
        <begin position="105"/>
        <end position="118"/>
    </location>
</feature>
<feature type="turn" evidence="31">
    <location>
        <begin position="119"/>
        <end position="121"/>
    </location>
</feature>
<feature type="helix" evidence="31">
    <location>
        <begin position="127"/>
        <end position="137"/>
    </location>
</feature>
<feature type="helix" evidence="31">
    <location>
        <begin position="148"/>
        <end position="150"/>
    </location>
</feature>
<feature type="helix" evidence="31">
    <location>
        <begin position="157"/>
        <end position="160"/>
    </location>
</feature>
<feature type="turn" evidence="31">
    <location>
        <begin position="164"/>
        <end position="169"/>
    </location>
</feature>
<feature type="strand" evidence="31">
    <location>
        <begin position="183"/>
        <end position="185"/>
    </location>
</feature>
<feature type="strand" evidence="31">
    <location>
        <begin position="188"/>
        <end position="194"/>
    </location>
</feature>
<feature type="strand" evidence="31">
    <location>
        <begin position="202"/>
        <end position="205"/>
    </location>
</feature>
<feature type="strand" evidence="31">
    <location>
        <begin position="207"/>
        <end position="210"/>
    </location>
</feature>
<feature type="strand" evidence="31">
    <location>
        <begin position="229"/>
        <end position="232"/>
    </location>
</feature>
<feature type="strand" evidence="31">
    <location>
        <begin position="238"/>
        <end position="240"/>
    </location>
</feature>
<feature type="strand" evidence="31">
    <location>
        <begin position="243"/>
        <end position="246"/>
    </location>
</feature>
<feature type="helix" evidence="31">
    <location>
        <begin position="250"/>
        <end position="253"/>
    </location>
</feature>
<feature type="strand" evidence="31">
    <location>
        <begin position="261"/>
        <end position="264"/>
    </location>
</feature>
<feature type="helix" evidence="31">
    <location>
        <begin position="278"/>
        <end position="290"/>
    </location>
</feature>
<feature type="strand" evidence="31">
    <location>
        <begin position="298"/>
        <end position="309"/>
    </location>
</feature>
<feature type="turn" evidence="31">
    <location>
        <begin position="310"/>
        <end position="313"/>
    </location>
</feature>
<feature type="strand" evidence="31">
    <location>
        <begin position="314"/>
        <end position="323"/>
    </location>
</feature>
<feature type="strand" evidence="31">
    <location>
        <begin position="333"/>
        <end position="339"/>
    </location>
</feature>
<feature type="helix" evidence="31">
    <location>
        <begin position="356"/>
        <end position="375"/>
    </location>
</feature>
<feature type="helix" evidence="31">
    <location>
        <begin position="385"/>
        <end position="419"/>
    </location>
</feature>
<feature type="helix" evidence="31">
    <location>
        <begin position="429"/>
        <end position="451"/>
    </location>
</feature>
<feature type="helix" evidence="31">
    <location>
        <begin position="452"/>
        <end position="454"/>
    </location>
</feature>
<feature type="helix" evidence="31">
    <location>
        <begin position="482"/>
        <end position="498"/>
    </location>
</feature>
<feature type="strand" evidence="31">
    <location>
        <begin position="499"/>
        <end position="502"/>
    </location>
</feature>
<feature type="strand" evidence="31">
    <location>
        <begin position="504"/>
        <end position="506"/>
    </location>
</feature>
<feature type="helix" evidence="31">
    <location>
        <begin position="511"/>
        <end position="521"/>
    </location>
</feature>
<feature type="turn" evidence="31">
    <location>
        <begin position="526"/>
        <end position="532"/>
    </location>
</feature>
<feature type="strand" evidence="31">
    <location>
        <begin position="534"/>
        <end position="536"/>
    </location>
</feature>
<feature type="helix" evidence="31">
    <location>
        <begin position="537"/>
        <end position="559"/>
    </location>
</feature>
<feature type="helix" evidence="29">
    <location>
        <begin position="704"/>
        <end position="731"/>
    </location>
</feature>
<feature type="helix" evidence="30">
    <location>
        <begin position="734"/>
        <end position="741"/>
    </location>
</feature>
<keyword id="KW-0002">3D-structure</keyword>
<keyword id="KW-0025">Alternative splicing</keyword>
<keyword id="KW-0106">Calcium</keyword>
<keyword id="KW-0107">Calcium channel</keyword>
<keyword id="KW-0109">Calcium transport</keyword>
<keyword id="KW-1003">Cell membrane</keyword>
<keyword id="KW-0966">Cell projection</keyword>
<keyword id="KW-0969">Cilium</keyword>
<keyword id="KW-0175">Coiled coil</keyword>
<keyword id="KW-0968">Cytoplasmic vesicle</keyword>
<keyword id="KW-1015">Disulfide bond</keyword>
<keyword id="KW-0325">Glycoprotein</keyword>
<keyword id="KW-0407">Ion channel</keyword>
<keyword id="KW-0406">Ion transport</keyword>
<keyword id="KW-0449">Lipoprotein</keyword>
<keyword id="KW-0472">Membrane</keyword>
<keyword id="KW-0479">Metal-binding</keyword>
<keyword id="KW-0564">Palmitate</keyword>
<keyword id="KW-1185">Reference proteome</keyword>
<keyword id="KW-0812">Transmembrane</keyword>
<keyword id="KW-1133">Transmembrane helix</keyword>
<keyword id="KW-0813">Transport</keyword>
<protein>
    <recommendedName>
        <fullName evidence="23">Polycystin-2-like protein 1</fullName>
        <shortName>Polycystin-2L1</shortName>
    </recommendedName>
    <alternativeName>
        <fullName>Polycystic kidney disease 2-like 1 protein</fullName>
    </alternativeName>
    <alternativeName>
        <fullName>Polycystin-2 homolog</fullName>
    </alternativeName>
    <alternativeName>
        <fullName evidence="18 22">Polycystin-L</fullName>
    </alternativeName>
    <alternativeName>
        <fullName>Polycystin-L1</fullName>
    </alternativeName>
</protein>
<sequence length="805" mass="91982">MNAVGSPEGQELQKLGSGAWDNPAYSGPPSPHGTLRVCTISSTGPLQPQPKKPEDEPQETAYRTQVSSCCLHICQGIRGLWGTTLTENTAENRELYIKTTLRELLVYIVFLVDICLLTYGMTSSSAYYYTKVMSELFLHTPSDTGVSFQAISSMADFWDFAQGPLLDSLYWTKWYNNQSLGHGSHSFIYYENMLLGVPRLRQLKVRNDSCVVHEDFREDILSCYDVYSPDKEEQLPFGPFNGTAWTYHSQDELGGFSHWGRLTSYSGGGYYLDLPGSRQGSAEALRALQEGLWLDRGTRVVFIDFSVYNANINLFCVLRLVVEFPATGGAIPSWQIRTVKLIRYVSNWDFFIVGCEVIFCVFIFYYVVEEILELHIHRLRYLSSIWNILDLVVILLSIVAVGFHIFRTLEVNRLMGKLLQQPNTYADFEFLAFWQTQYNNMNAVNLFFAWIKIFKYISFNKTMTQLSSTLARCAKDILGFAVMFFIVFFAYAQLGYLLFGTQVENFSTFIKCIFTQFRIILGDFDYNAIDNANRILGPAYFVTYVFFVFFVLLNMFLAIINDTYSEVKEELAGQKDELQLSDLLKQGYNKTLLRLRLRKERVSDVQKVLQGGEQEIQFEDFTNTLRELGHAEHEITELTATFTKFDRDGNRILDEKEQEKMRQDLEEERVALNTEIEKLGRSIVSSPQGKSGPEAARAGGWVSGEEFYMLTRRVLQLETVLEGVVSQIDAVGSKLKMLERKGWLAPSPGVKEQAIWKHPQPAPAVTPDPWGVQGGQESEVPYKREEEALEERRLSRGEIPTLQRS</sequence>